<reference key="1">
    <citation type="submission" date="1998-10" db="EMBL/GenBank/DDBJ databases">
        <title>A cell surface form of rat coronin.</title>
        <authorList>
            <person name="Male D.K."/>
            <person name="Politopoulou G."/>
        </authorList>
    </citation>
    <scope>NUCLEOTIDE SEQUENCE [MRNA]</scope>
</reference>
<reference key="2">
    <citation type="journal article" date="2005" name="J. Biol. Chem.">
        <title>Phosphorylation of coronin 1B by protein kinase C regulates interaction with Arp2/3 and cell motility.</title>
        <authorList>
            <person name="Cai L."/>
            <person name="Holoweckyj N."/>
            <person name="Schaller M.D."/>
            <person name="Bear J.E."/>
        </authorList>
    </citation>
    <scope>INTERACTION WITH ACTR2; ARPC1B AND ARPC2</scope>
</reference>
<proteinExistence type="evidence at protein level"/>
<organism>
    <name type="scientific">Rattus norvegicus</name>
    <name type="common">Rat</name>
    <dbReference type="NCBI Taxonomy" id="10116"/>
    <lineage>
        <taxon>Eukaryota</taxon>
        <taxon>Metazoa</taxon>
        <taxon>Chordata</taxon>
        <taxon>Craniata</taxon>
        <taxon>Vertebrata</taxon>
        <taxon>Euteleostomi</taxon>
        <taxon>Mammalia</taxon>
        <taxon>Eutheria</taxon>
        <taxon>Euarchontoglires</taxon>
        <taxon>Glires</taxon>
        <taxon>Rodentia</taxon>
        <taxon>Myomorpha</taxon>
        <taxon>Muroidea</taxon>
        <taxon>Muridae</taxon>
        <taxon>Murinae</taxon>
        <taxon>Rattus</taxon>
    </lineage>
</organism>
<gene>
    <name type="primary">Coro1b</name>
</gene>
<name>COR1B_RAT</name>
<dbReference type="EMBL" id="AJ006064">
    <property type="protein sequence ID" value="CAA06836.1"/>
    <property type="molecule type" value="mRNA"/>
</dbReference>
<dbReference type="RefSeq" id="NP_062095.1">
    <property type="nucleotide sequence ID" value="NM_019222.1"/>
</dbReference>
<dbReference type="SMR" id="O89046"/>
<dbReference type="BioGRID" id="248116">
    <property type="interactions" value="1"/>
</dbReference>
<dbReference type="FunCoup" id="O89046">
    <property type="interactions" value="2060"/>
</dbReference>
<dbReference type="IntAct" id="O89046">
    <property type="interactions" value="3"/>
</dbReference>
<dbReference type="MINT" id="O89046"/>
<dbReference type="STRING" id="10116.ENSRNOP00000035020"/>
<dbReference type="iPTMnet" id="O89046"/>
<dbReference type="PhosphoSitePlus" id="O89046"/>
<dbReference type="SwissPalm" id="O89046"/>
<dbReference type="jPOST" id="O89046"/>
<dbReference type="PaxDb" id="10116-ENSRNOP00000035020"/>
<dbReference type="GeneID" id="29474"/>
<dbReference type="KEGG" id="rno:29474"/>
<dbReference type="UCSC" id="RGD:2382">
    <property type="organism name" value="rat"/>
</dbReference>
<dbReference type="AGR" id="RGD:2382"/>
<dbReference type="CTD" id="57175"/>
<dbReference type="RGD" id="2382">
    <property type="gene designation" value="Coro1b"/>
</dbReference>
<dbReference type="eggNOG" id="KOG0303">
    <property type="taxonomic scope" value="Eukaryota"/>
</dbReference>
<dbReference type="InParanoid" id="O89046"/>
<dbReference type="OrthoDB" id="1850764at2759"/>
<dbReference type="PhylomeDB" id="O89046"/>
<dbReference type="PRO" id="PR:O89046"/>
<dbReference type="Proteomes" id="UP000002494">
    <property type="component" value="Unplaced"/>
</dbReference>
<dbReference type="GO" id="GO:0005884">
    <property type="term" value="C:actin filament"/>
    <property type="evidence" value="ECO:0000266"/>
    <property type="project" value="RGD"/>
</dbReference>
<dbReference type="GO" id="GO:0031252">
    <property type="term" value="C:cell leading edge"/>
    <property type="evidence" value="ECO:0000314"/>
    <property type="project" value="RGD"/>
</dbReference>
<dbReference type="GO" id="GO:0071944">
    <property type="term" value="C:cell periphery"/>
    <property type="evidence" value="ECO:0000314"/>
    <property type="project" value="UniProtKB"/>
</dbReference>
<dbReference type="GO" id="GO:0005737">
    <property type="term" value="C:cytoplasm"/>
    <property type="evidence" value="ECO:0000266"/>
    <property type="project" value="RGD"/>
</dbReference>
<dbReference type="GO" id="GO:0005829">
    <property type="term" value="C:cytosol"/>
    <property type="evidence" value="ECO:0000314"/>
    <property type="project" value="UniProtKB"/>
</dbReference>
<dbReference type="GO" id="GO:0098978">
    <property type="term" value="C:glutamatergic synapse"/>
    <property type="evidence" value="ECO:0000266"/>
    <property type="project" value="RGD"/>
</dbReference>
<dbReference type="GO" id="GO:0030027">
    <property type="term" value="C:lamellipodium"/>
    <property type="evidence" value="ECO:0000314"/>
    <property type="project" value="UniProtKB"/>
</dbReference>
<dbReference type="GO" id="GO:0048471">
    <property type="term" value="C:perinuclear region of cytoplasm"/>
    <property type="evidence" value="ECO:0000314"/>
    <property type="project" value="UniProtKB"/>
</dbReference>
<dbReference type="GO" id="GO:0005886">
    <property type="term" value="C:plasma membrane"/>
    <property type="evidence" value="ECO:0000266"/>
    <property type="project" value="RGD"/>
</dbReference>
<dbReference type="GO" id="GO:0001725">
    <property type="term" value="C:stress fiber"/>
    <property type="evidence" value="ECO:0000314"/>
    <property type="project" value="UniProtKB"/>
</dbReference>
<dbReference type="GO" id="GO:0045202">
    <property type="term" value="C:synapse"/>
    <property type="evidence" value="ECO:0000266"/>
    <property type="project" value="RGD"/>
</dbReference>
<dbReference type="GO" id="GO:0051015">
    <property type="term" value="F:actin filament binding"/>
    <property type="evidence" value="ECO:0000266"/>
    <property type="project" value="RGD"/>
</dbReference>
<dbReference type="GO" id="GO:0071933">
    <property type="term" value="F:Arp2/3 complex binding"/>
    <property type="evidence" value="ECO:0000353"/>
    <property type="project" value="UniProtKB"/>
</dbReference>
<dbReference type="GO" id="GO:0008092">
    <property type="term" value="F:cytoskeletal protein binding"/>
    <property type="evidence" value="ECO:0000353"/>
    <property type="project" value="RGD"/>
</dbReference>
<dbReference type="GO" id="GO:0042802">
    <property type="term" value="F:identical protein binding"/>
    <property type="evidence" value="ECO:0000266"/>
    <property type="project" value="RGD"/>
</dbReference>
<dbReference type="GO" id="GO:0044877">
    <property type="term" value="F:protein-containing complex binding"/>
    <property type="evidence" value="ECO:0000353"/>
    <property type="project" value="RGD"/>
</dbReference>
<dbReference type="GO" id="GO:0030036">
    <property type="term" value="P:actin cytoskeleton organization"/>
    <property type="evidence" value="ECO:0000266"/>
    <property type="project" value="RGD"/>
</dbReference>
<dbReference type="GO" id="GO:0090135">
    <property type="term" value="P:actin filament branching"/>
    <property type="evidence" value="ECO:0000266"/>
    <property type="project" value="RGD"/>
</dbReference>
<dbReference type="GO" id="GO:0051017">
    <property type="term" value="P:actin filament bundle assembly"/>
    <property type="evidence" value="ECO:0000266"/>
    <property type="project" value="RGD"/>
</dbReference>
<dbReference type="GO" id="GO:0007015">
    <property type="term" value="P:actin filament organization"/>
    <property type="evidence" value="ECO:0000318"/>
    <property type="project" value="GO_Central"/>
</dbReference>
<dbReference type="GO" id="GO:0016477">
    <property type="term" value="P:cell migration"/>
    <property type="evidence" value="ECO:0000266"/>
    <property type="project" value="RGD"/>
</dbReference>
<dbReference type="GO" id="GO:0036120">
    <property type="term" value="P:cellular response to platelet-derived growth factor stimulus"/>
    <property type="evidence" value="ECO:0000314"/>
    <property type="project" value="RGD"/>
</dbReference>
<dbReference type="GO" id="GO:0035767">
    <property type="term" value="P:endothelial cell chemotaxis"/>
    <property type="evidence" value="ECO:0000266"/>
    <property type="project" value="RGD"/>
</dbReference>
<dbReference type="GO" id="GO:0035556">
    <property type="term" value="P:intracellular signal transduction"/>
    <property type="evidence" value="ECO:0000314"/>
    <property type="project" value="RGD"/>
</dbReference>
<dbReference type="GO" id="GO:0034316">
    <property type="term" value="P:negative regulation of Arp2/3 complex-mediated actin nucleation"/>
    <property type="evidence" value="ECO:0000266"/>
    <property type="project" value="RGD"/>
</dbReference>
<dbReference type="GO" id="GO:2000393">
    <property type="term" value="P:negative regulation of lamellipodium morphogenesis"/>
    <property type="evidence" value="ECO:0000315"/>
    <property type="project" value="UniProtKB"/>
</dbReference>
<dbReference type="GO" id="GO:0071672">
    <property type="term" value="P:negative regulation of smooth muscle cell chemotaxis"/>
    <property type="evidence" value="ECO:0000315"/>
    <property type="project" value="UniProtKB"/>
</dbReference>
<dbReference type="GO" id="GO:2000394">
    <property type="term" value="P:positive regulation of lamellipodium morphogenesis"/>
    <property type="evidence" value="ECO:0000266"/>
    <property type="project" value="RGD"/>
</dbReference>
<dbReference type="GO" id="GO:1902463">
    <property type="term" value="P:protein localization to cell leading edge"/>
    <property type="evidence" value="ECO:0000266"/>
    <property type="project" value="RGD"/>
</dbReference>
<dbReference type="GO" id="GO:0034315">
    <property type="term" value="P:regulation of Arp2/3 complex-mediated actin nucleation"/>
    <property type="evidence" value="ECO:0000305"/>
    <property type="project" value="UniProtKB"/>
</dbReference>
<dbReference type="GO" id="GO:0031529">
    <property type="term" value="P:ruffle organization"/>
    <property type="evidence" value="ECO:0000266"/>
    <property type="project" value="RGD"/>
</dbReference>
<dbReference type="GO" id="GO:0042060">
    <property type="term" value="P:wound healing"/>
    <property type="evidence" value="ECO:0000266"/>
    <property type="project" value="RGD"/>
</dbReference>
<dbReference type="FunFam" id="2.130.10.10:FF:000003">
    <property type="entry name" value="Coronin"/>
    <property type="match status" value="1"/>
</dbReference>
<dbReference type="Gene3D" id="2.130.10.10">
    <property type="entry name" value="YVTN repeat-like/Quinoprotein amine dehydrogenase"/>
    <property type="match status" value="1"/>
</dbReference>
<dbReference type="InterPro" id="IPR015505">
    <property type="entry name" value="Coronin"/>
</dbReference>
<dbReference type="InterPro" id="IPR015048">
    <property type="entry name" value="DUF1899"/>
</dbReference>
<dbReference type="InterPro" id="IPR015943">
    <property type="entry name" value="WD40/YVTN_repeat-like_dom_sf"/>
</dbReference>
<dbReference type="InterPro" id="IPR019775">
    <property type="entry name" value="WD40_repeat_CS"/>
</dbReference>
<dbReference type="InterPro" id="IPR036322">
    <property type="entry name" value="WD40_repeat_dom_sf"/>
</dbReference>
<dbReference type="InterPro" id="IPR001680">
    <property type="entry name" value="WD40_rpt"/>
</dbReference>
<dbReference type="PANTHER" id="PTHR10856">
    <property type="entry name" value="CORONIN"/>
    <property type="match status" value="1"/>
</dbReference>
<dbReference type="PANTHER" id="PTHR10856:SF24">
    <property type="entry name" value="CORONIN-1B"/>
    <property type="match status" value="1"/>
</dbReference>
<dbReference type="Pfam" id="PF08953">
    <property type="entry name" value="DUF1899"/>
    <property type="match status" value="1"/>
</dbReference>
<dbReference type="Pfam" id="PF00400">
    <property type="entry name" value="WD40"/>
    <property type="match status" value="3"/>
</dbReference>
<dbReference type="Pfam" id="PF16300">
    <property type="entry name" value="WD40_4"/>
    <property type="match status" value="1"/>
</dbReference>
<dbReference type="SMART" id="SM01166">
    <property type="entry name" value="DUF1899"/>
    <property type="match status" value="1"/>
</dbReference>
<dbReference type="SMART" id="SM01167">
    <property type="entry name" value="DUF1900"/>
    <property type="match status" value="1"/>
</dbReference>
<dbReference type="SMART" id="SM00320">
    <property type="entry name" value="WD40"/>
    <property type="match status" value="3"/>
</dbReference>
<dbReference type="SUPFAM" id="SSF50978">
    <property type="entry name" value="WD40 repeat-like"/>
    <property type="match status" value="1"/>
</dbReference>
<dbReference type="PROSITE" id="PS00678">
    <property type="entry name" value="WD_REPEATS_1"/>
    <property type="match status" value="1"/>
</dbReference>
<dbReference type="PROSITE" id="PS50082">
    <property type="entry name" value="WD_REPEATS_2"/>
    <property type="match status" value="2"/>
</dbReference>
<dbReference type="PROSITE" id="PS50294">
    <property type="entry name" value="WD_REPEATS_REGION"/>
    <property type="match status" value="1"/>
</dbReference>
<comment type="function">
    <text evidence="1">Regulates leading edge dynamics and cell motility in fibroblasts. May be involved in cytokinesis and signal transduction (By similarity).</text>
</comment>
<comment type="subunit">
    <text evidence="1">Forms homooligomers, but does not form complexes with the other coronins. Interacts with Arp2/3 complex components, including ACTR2, ARPC1B and ARPC2. Binds actin (By similarity).</text>
</comment>
<comment type="subcellular location">
    <subcellularLocation>
        <location evidence="2">Cytoplasm</location>
        <location evidence="2">Cytoskeleton</location>
    </subcellularLocation>
    <subcellularLocation>
        <location evidence="2">Cytoplasm</location>
        <location evidence="2">Cytoskeleton</location>
        <location evidence="2">Stress fiber</location>
    </subcellularLocation>
    <text evidence="2">Localized to the leading edge in fibroblasts, as well as weakly along actin stress fibers.</text>
</comment>
<comment type="PTM">
    <text evidence="1">Phosphorylation on Ser-2 regulates the interaction with the Arp2/3 complex and cell motility in fibroblasts. Phosphorylation does not seem to affect subcellular location (By similarity).</text>
</comment>
<comment type="similarity">
    <text evidence="4">Belongs to the WD repeat coronin family.</text>
</comment>
<sequence length="484" mass="53845">MSFRKVVRQSKFRHVFGQPVKNDQCYEDIRVSRVTWDSTFCAVNPKFLAVIVEASGGGAFMVLPLNKTGRIDKAYPTVCGHTGPVLDIDWCPHNDEVIASGSEDCTVMVWQIPENGLTSPLTEPVVVLEGHTKRVGIITWHPTARNVLLSAGCDNVVLIWNVGTAEELYRLDSLHPDLIYNVSWNHNGSLFCTACKDKSVRIIDPRRGTLVAEREKAHEGARPMRAIFLADGKVFTAGFSRMSERQLALWDPENFEEPMALQELDSSNGALLPFYDPDTSVVYVCGKGDSSIRYFEITDEPPYIHFLNTFTSKEPQRGMGSMPKRGLEVSKCEIARFYKLHERKCEPIVMTVPRKSDLFQDDLYPDTAGPDAALEAEDWVSGQDADPILISLREAYVPSKQRDLKVSRRNVLSDSKPAGYSRSGVSTATAITDIPSGNLAGSGEAGKLEEVMHGLRALRVLVKEQGERISRLEEHLGRMENGDT</sequence>
<keyword id="KW-0009">Actin-binding</keyword>
<keyword id="KW-0175">Coiled coil</keyword>
<keyword id="KW-0963">Cytoplasm</keyword>
<keyword id="KW-0206">Cytoskeleton</keyword>
<keyword id="KW-0597">Phosphoprotein</keyword>
<keyword id="KW-1185">Reference proteome</keyword>
<keyword id="KW-0677">Repeat</keyword>
<keyword id="KW-0853">WD repeat</keyword>
<protein>
    <recommendedName>
        <fullName>Coronin-1B</fullName>
    </recommendedName>
    <alternativeName>
        <fullName>Coronin-2</fullName>
    </alternativeName>
</protein>
<feature type="chain" id="PRO_0000050925" description="Coronin-1B">
    <location>
        <begin position="1"/>
        <end position="484"/>
    </location>
</feature>
<feature type="repeat" description="WD 1">
    <location>
        <begin position="80"/>
        <end position="120"/>
    </location>
</feature>
<feature type="repeat" description="WD 2">
    <location>
        <begin position="130"/>
        <end position="170"/>
    </location>
</feature>
<feature type="repeat" description="WD 3">
    <location>
        <begin position="174"/>
        <end position="213"/>
    </location>
</feature>
<feature type="repeat" description="WD 4">
    <location>
        <begin position="217"/>
        <end position="260"/>
    </location>
</feature>
<feature type="repeat" description="WD 5">
    <location>
        <begin position="265"/>
        <end position="305"/>
    </location>
</feature>
<feature type="coiled-coil region" evidence="3">
    <location>
        <begin position="447"/>
        <end position="481"/>
    </location>
</feature>
<feature type="modified residue" description="Phosphoserine" evidence="2">
    <location>
        <position position="2"/>
    </location>
</feature>
<evidence type="ECO:0000250" key="1"/>
<evidence type="ECO:0000250" key="2">
    <source>
        <dbReference type="UniProtKB" id="Q9BR76"/>
    </source>
</evidence>
<evidence type="ECO:0000255" key="3"/>
<evidence type="ECO:0000305" key="4"/>
<accession>O89046</accession>